<proteinExistence type="evidence at protein level"/>
<name>PKP1_HUMAN</name>
<sequence>MNHSPLKTALAYECFQDQDNSTLALPSDQKMKTGTSGRQRVQEQVMMTVKRQKSKSSQSSTLSHSNRGSMYDGLADNYNYGTTSRSSYYSKFQAGNGSWGYPIYNGTLKREPDNRRFSSYSQMENWSRHYPRGSCNTTGAGSDICFMQKIKASRSEPDLYCDPRGTLRKGTLGSKGQKTTQNRYSFYSTCSGQKAIKKCPVRPPSCASKQDPVYIPPISCNKDLSFGHSRASSKICSEDIECSGLTIPKAVQYLSSQDEKYQAIGAYYIQHTCFQDESAKQQVYQLGGICKLVDLLRSPNQNVQQAAAGALRNLVFRSTTNKLETRRQNGIREAVSLLRRTGNAEIQKQLTGLLWNLSSTDELKEELIADALPVLADRVIIPFSGWCDGNSNMSREVVDPEVFFNATGCLRKRLGMRELLALVPQRATSSRVNLSSADAGRQTMRNYSGLIDSLMAYVQNCVAASRCDDKSVENCMCVLHNLSYRLDAEVPTRYRQLEYNARNAYTEKSSTGCFSNKSDKMMNNNYDCPLPEEETNPKGSGWLYHSDAIRTYLNLMGKSKKDATLEACAGALQNLTASKGLMSSGMSQLIGLKEKGLPQIARLLQSGNSDVVRSGASLLSNMSRHPLLHRVMGNQVFPEVTRLLTSHTGNTSNSEDILSSACYTVRNLMASQPQLAKQYFSSSMLNNIINLCRSSASPKAAEAARLLLSDMWSSKELQGVLRQQGFDRNMLGTLAGANSLRNFTSRF</sequence>
<protein>
    <recommendedName>
        <fullName>Plakophilin-1</fullName>
    </recommendedName>
    <alternativeName>
        <fullName>Band 6 protein</fullName>
        <shortName>B6P</shortName>
    </alternativeName>
</protein>
<organism>
    <name type="scientific">Homo sapiens</name>
    <name type="common">Human</name>
    <dbReference type="NCBI Taxonomy" id="9606"/>
    <lineage>
        <taxon>Eukaryota</taxon>
        <taxon>Metazoa</taxon>
        <taxon>Chordata</taxon>
        <taxon>Craniata</taxon>
        <taxon>Vertebrata</taxon>
        <taxon>Euteleostomi</taxon>
        <taxon>Mammalia</taxon>
        <taxon>Eutheria</taxon>
        <taxon>Euarchontoglires</taxon>
        <taxon>Primates</taxon>
        <taxon>Haplorrhini</taxon>
        <taxon>Catarrhini</taxon>
        <taxon>Hominidae</taxon>
        <taxon>Homo</taxon>
    </lineage>
</organism>
<accession>Q13835</accession>
<accession>O00645</accession>
<accession>Q14CA0</accession>
<accession>Q15152</accession>
<keyword id="KW-0002">3D-structure</keyword>
<keyword id="KW-0025">Alternative splicing</keyword>
<keyword id="KW-0130">Cell adhesion</keyword>
<keyword id="KW-0965">Cell junction</keyword>
<keyword id="KW-1003">Cell membrane</keyword>
<keyword id="KW-0963">Cytoplasm</keyword>
<keyword id="KW-0217">Developmental protein</keyword>
<keyword id="KW-0238">DNA-binding</keyword>
<keyword id="KW-0038">Ectodermal dysplasia</keyword>
<keyword id="KW-0472">Membrane</keyword>
<keyword id="KW-0539">Nucleus</keyword>
<keyword id="KW-0597">Phosphoprotein</keyword>
<keyword id="KW-1267">Proteomics identification</keyword>
<keyword id="KW-1185">Reference proteome</keyword>
<keyword id="KW-0677">Repeat</keyword>
<keyword id="KW-0694">RNA-binding</keyword>
<gene>
    <name type="primary">PKP1</name>
</gene>
<evidence type="ECO:0000250" key="1">
    <source>
        <dbReference type="UniProtKB" id="P97350"/>
    </source>
</evidence>
<evidence type="ECO:0000256" key="2">
    <source>
        <dbReference type="SAM" id="MobiDB-lite"/>
    </source>
</evidence>
<evidence type="ECO:0000269" key="3">
    <source>
    </source>
</evidence>
<evidence type="ECO:0000269" key="4">
    <source>
    </source>
</evidence>
<evidence type="ECO:0000269" key="5">
    <source>
    </source>
</evidence>
<evidence type="ECO:0000269" key="6">
    <source>
    </source>
</evidence>
<evidence type="ECO:0000269" key="7">
    <source>
    </source>
</evidence>
<evidence type="ECO:0000269" key="8">
    <source>
    </source>
</evidence>
<evidence type="ECO:0000269" key="9">
    <source>
    </source>
</evidence>
<evidence type="ECO:0000269" key="10">
    <source>
    </source>
</evidence>
<evidence type="ECO:0000269" key="11">
    <source>
    </source>
</evidence>
<evidence type="ECO:0000269" key="12">
    <source>
    </source>
</evidence>
<evidence type="ECO:0000269" key="13">
    <source>
    </source>
</evidence>
<evidence type="ECO:0000303" key="14">
    <source>
    </source>
</evidence>
<evidence type="ECO:0000303" key="15">
    <source>
    </source>
</evidence>
<evidence type="ECO:0000303" key="16">
    <source>
    </source>
</evidence>
<evidence type="ECO:0000305" key="17"/>
<evidence type="ECO:0007829" key="18">
    <source>
        <dbReference type="PDB" id="1XM9"/>
    </source>
</evidence>
<dbReference type="EMBL" id="X79293">
    <property type="protein sequence ID" value="CAA55881.1"/>
    <property type="molecule type" value="mRNA"/>
</dbReference>
<dbReference type="EMBL" id="Z34974">
    <property type="protein sequence ID" value="CAA84426.1"/>
    <property type="molecule type" value="mRNA"/>
</dbReference>
<dbReference type="EMBL" id="Z73677">
    <property type="status" value="NOT_ANNOTATED_CDS"/>
    <property type="molecule type" value="Genomic_DNA"/>
</dbReference>
<dbReference type="EMBL" id="Z73678">
    <property type="protein sequence ID" value="CAA98022.1"/>
    <property type="molecule type" value="Genomic_DNA"/>
</dbReference>
<dbReference type="EMBL" id="CH471067">
    <property type="protein sequence ID" value="EAW91350.1"/>
    <property type="molecule type" value="Genomic_DNA"/>
</dbReference>
<dbReference type="EMBL" id="BC114571">
    <property type="protein sequence ID" value="AAI14572.1"/>
    <property type="molecule type" value="mRNA"/>
</dbReference>
<dbReference type="CCDS" id="CCDS30966.1">
    <molecule id="Q13835-1"/>
</dbReference>
<dbReference type="CCDS" id="CCDS30967.1">
    <molecule id="Q13835-2"/>
</dbReference>
<dbReference type="PIR" id="S60712">
    <property type="entry name" value="S60712"/>
</dbReference>
<dbReference type="RefSeq" id="NP_000290.2">
    <molecule id="Q13835-1"/>
    <property type="nucleotide sequence ID" value="NM_000299.3"/>
</dbReference>
<dbReference type="RefSeq" id="NP_001005337.1">
    <molecule id="Q13835-2"/>
    <property type="nucleotide sequence ID" value="NM_001005337.3"/>
</dbReference>
<dbReference type="PDB" id="1XM9">
    <property type="method" value="X-ray"/>
    <property type="resolution" value="2.80 A"/>
    <property type="chains" value="A=244-721"/>
</dbReference>
<dbReference type="PDBsum" id="1XM9"/>
<dbReference type="SMR" id="Q13835"/>
<dbReference type="BioGRID" id="111334">
    <property type="interactions" value="201"/>
</dbReference>
<dbReference type="CORUM" id="Q13835"/>
<dbReference type="FunCoup" id="Q13835">
    <property type="interactions" value="234"/>
</dbReference>
<dbReference type="IntAct" id="Q13835">
    <property type="interactions" value="96"/>
</dbReference>
<dbReference type="MINT" id="Q13835"/>
<dbReference type="STRING" id="9606.ENSP00000263946"/>
<dbReference type="ChEMBL" id="CHEMBL4295817"/>
<dbReference type="GlyGen" id="Q13835">
    <property type="glycosylation" value="1 site, 1 O-linked glycan (1 site)"/>
</dbReference>
<dbReference type="iPTMnet" id="Q13835"/>
<dbReference type="PhosphoSitePlus" id="Q13835"/>
<dbReference type="SwissPalm" id="Q13835"/>
<dbReference type="BioMuta" id="PKP1"/>
<dbReference type="DMDM" id="20138951"/>
<dbReference type="jPOST" id="Q13835"/>
<dbReference type="MassIVE" id="Q13835"/>
<dbReference type="PaxDb" id="9606-ENSP00000263946"/>
<dbReference type="PeptideAtlas" id="Q13835"/>
<dbReference type="PRIDE" id="Q13835"/>
<dbReference type="ProteomicsDB" id="59699">
    <molecule id="Q13835-1"/>
</dbReference>
<dbReference type="ProteomicsDB" id="59700">
    <molecule id="Q13835-2"/>
</dbReference>
<dbReference type="Antibodypedia" id="20641">
    <property type="antibodies" value="211 antibodies from 20 providers"/>
</dbReference>
<dbReference type="DNASU" id="5317"/>
<dbReference type="Ensembl" id="ENST00000263946.7">
    <molecule id="Q13835-1"/>
    <property type="protein sequence ID" value="ENSP00000263946.3"/>
    <property type="gene ID" value="ENSG00000081277.13"/>
</dbReference>
<dbReference type="Ensembl" id="ENST00000352845.3">
    <molecule id="Q13835-1"/>
    <property type="protein sequence ID" value="ENSP00000295597.3"/>
    <property type="gene ID" value="ENSG00000081277.13"/>
</dbReference>
<dbReference type="Ensembl" id="ENST00000367324.8">
    <molecule id="Q13835-2"/>
    <property type="protein sequence ID" value="ENSP00000356293.4"/>
    <property type="gene ID" value="ENSG00000081277.13"/>
</dbReference>
<dbReference type="GeneID" id="5317"/>
<dbReference type="KEGG" id="hsa:5317"/>
<dbReference type="MANE-Select" id="ENST00000367324.8">
    <molecule id="Q13835-2"/>
    <property type="protein sequence ID" value="ENSP00000356293.4"/>
    <property type="RefSeq nucleotide sequence ID" value="NM_001005337.3"/>
    <property type="RefSeq protein sequence ID" value="NP_001005337.1"/>
</dbReference>
<dbReference type="UCSC" id="uc001gwd.3">
    <molecule id="Q13835-1"/>
    <property type="organism name" value="human"/>
</dbReference>
<dbReference type="AGR" id="HGNC:9023"/>
<dbReference type="CTD" id="5317"/>
<dbReference type="DisGeNET" id="5317"/>
<dbReference type="GeneCards" id="PKP1"/>
<dbReference type="HGNC" id="HGNC:9023">
    <property type="gene designation" value="PKP1"/>
</dbReference>
<dbReference type="HPA" id="ENSG00000081277">
    <property type="expression patterns" value="Group enriched (esophagus, skin, vagina)"/>
</dbReference>
<dbReference type="MalaCards" id="PKP1"/>
<dbReference type="MIM" id="601975">
    <property type="type" value="gene"/>
</dbReference>
<dbReference type="MIM" id="604536">
    <property type="type" value="phenotype"/>
</dbReference>
<dbReference type="neXtProt" id="NX_Q13835"/>
<dbReference type="OpenTargets" id="ENSG00000081277"/>
<dbReference type="Orphanet" id="158668">
    <property type="disease" value="Ectodermal dysplasia-skin fragility syndrome"/>
</dbReference>
<dbReference type="PharmGKB" id="PA33356"/>
<dbReference type="VEuPathDB" id="HostDB:ENSG00000081277"/>
<dbReference type="eggNOG" id="KOG1048">
    <property type="taxonomic scope" value="Eukaryota"/>
</dbReference>
<dbReference type="GeneTree" id="ENSGT00940000156735"/>
<dbReference type="HOGENOM" id="CLU_009111_3_1_1"/>
<dbReference type="InParanoid" id="Q13835"/>
<dbReference type="OMA" id="YGAMTIQ"/>
<dbReference type="OrthoDB" id="3245100at2759"/>
<dbReference type="PAN-GO" id="Q13835">
    <property type="GO annotations" value="8 GO annotations based on evolutionary models"/>
</dbReference>
<dbReference type="PhylomeDB" id="Q13835"/>
<dbReference type="TreeFam" id="TF321877"/>
<dbReference type="PathwayCommons" id="Q13835"/>
<dbReference type="Reactome" id="R-HSA-351906">
    <property type="pathway name" value="Apoptotic cleavage of cell adhesion proteins"/>
</dbReference>
<dbReference type="Reactome" id="R-HSA-6798695">
    <property type="pathway name" value="Neutrophil degranulation"/>
</dbReference>
<dbReference type="Reactome" id="R-HSA-6805567">
    <property type="pathway name" value="Keratinization"/>
</dbReference>
<dbReference type="Reactome" id="R-HSA-6809371">
    <property type="pathway name" value="Formation of the cornified envelope"/>
</dbReference>
<dbReference type="SignaLink" id="Q13835"/>
<dbReference type="SIGNOR" id="Q13835"/>
<dbReference type="BioGRID-ORCS" id="5317">
    <property type="hits" value="7 hits in 1157 CRISPR screens"/>
</dbReference>
<dbReference type="CD-CODE" id="DEE660B4">
    <property type="entry name" value="Stress granule"/>
</dbReference>
<dbReference type="ChiTaRS" id="PKP1">
    <property type="organism name" value="human"/>
</dbReference>
<dbReference type="EvolutionaryTrace" id="Q13835"/>
<dbReference type="GeneWiki" id="PKP1"/>
<dbReference type="GenomeRNAi" id="5317"/>
<dbReference type="Pharos" id="Q13835">
    <property type="development level" value="Tbio"/>
</dbReference>
<dbReference type="PRO" id="PR:Q13835"/>
<dbReference type="Proteomes" id="UP000005640">
    <property type="component" value="Chromosome 1"/>
</dbReference>
<dbReference type="RNAct" id="Q13835">
    <property type="molecule type" value="protein"/>
</dbReference>
<dbReference type="Bgee" id="ENSG00000081277">
    <property type="expression patterns" value="Expressed in upper arm skin and 114 other cell types or tissues"/>
</dbReference>
<dbReference type="ExpressionAtlas" id="Q13835">
    <property type="expression patterns" value="baseline and differential"/>
</dbReference>
<dbReference type="GO" id="GO:0005912">
    <property type="term" value="C:adherens junction"/>
    <property type="evidence" value="ECO:0000318"/>
    <property type="project" value="GO_Central"/>
</dbReference>
<dbReference type="GO" id="GO:0001533">
    <property type="term" value="C:cornified envelope"/>
    <property type="evidence" value="ECO:0000304"/>
    <property type="project" value="Reactome"/>
</dbReference>
<dbReference type="GO" id="GO:0005737">
    <property type="term" value="C:cytoplasm"/>
    <property type="evidence" value="ECO:0000314"/>
    <property type="project" value="UniProtKB"/>
</dbReference>
<dbReference type="GO" id="GO:0010494">
    <property type="term" value="C:cytoplasmic stress granule"/>
    <property type="evidence" value="ECO:0007669"/>
    <property type="project" value="UniProtKB-SubCell"/>
</dbReference>
<dbReference type="GO" id="GO:0030057">
    <property type="term" value="C:desmosome"/>
    <property type="evidence" value="ECO:0000314"/>
    <property type="project" value="UniProtKB"/>
</dbReference>
<dbReference type="GO" id="GO:0101003">
    <property type="term" value="C:ficolin-1-rich granule membrane"/>
    <property type="evidence" value="ECO:0000304"/>
    <property type="project" value="Reactome"/>
</dbReference>
<dbReference type="GO" id="GO:0005882">
    <property type="term" value="C:intermediate filament"/>
    <property type="evidence" value="ECO:0000304"/>
    <property type="project" value="ProtInc"/>
</dbReference>
<dbReference type="GO" id="GO:0097165">
    <property type="term" value="C:nuclear stress granule"/>
    <property type="evidence" value="ECO:0000314"/>
    <property type="project" value="UniProtKB"/>
</dbReference>
<dbReference type="GO" id="GO:0005654">
    <property type="term" value="C:nucleoplasm"/>
    <property type="evidence" value="ECO:0000314"/>
    <property type="project" value="HPA"/>
</dbReference>
<dbReference type="GO" id="GO:0005634">
    <property type="term" value="C:nucleus"/>
    <property type="evidence" value="ECO:0000314"/>
    <property type="project" value="UniProtKB"/>
</dbReference>
<dbReference type="GO" id="GO:0048471">
    <property type="term" value="C:perinuclear region of cytoplasm"/>
    <property type="evidence" value="ECO:0000314"/>
    <property type="project" value="UniProtKB"/>
</dbReference>
<dbReference type="GO" id="GO:0005886">
    <property type="term" value="C:plasma membrane"/>
    <property type="evidence" value="ECO:0000314"/>
    <property type="project" value="HPA"/>
</dbReference>
<dbReference type="GO" id="GO:0045296">
    <property type="term" value="F:cadherin binding"/>
    <property type="evidence" value="ECO:0000318"/>
    <property type="project" value="GO_Central"/>
</dbReference>
<dbReference type="GO" id="GO:0003677">
    <property type="term" value="F:DNA binding"/>
    <property type="evidence" value="ECO:0000314"/>
    <property type="project" value="UniProtKB"/>
</dbReference>
<dbReference type="GO" id="GO:0019215">
    <property type="term" value="F:intermediate filament binding"/>
    <property type="evidence" value="ECO:0000303"/>
    <property type="project" value="UniProtKB"/>
</dbReference>
<dbReference type="GO" id="GO:0005521">
    <property type="term" value="F:lamin binding"/>
    <property type="evidence" value="ECO:0000314"/>
    <property type="project" value="BHF-UCL"/>
</dbReference>
<dbReference type="GO" id="GO:0003723">
    <property type="term" value="F:RNA binding"/>
    <property type="evidence" value="ECO:0007669"/>
    <property type="project" value="UniProtKB-KW"/>
</dbReference>
<dbReference type="GO" id="GO:0030280">
    <property type="term" value="F:structural constituent of skin epidermis"/>
    <property type="evidence" value="ECO:0000303"/>
    <property type="project" value="UniProtKB"/>
</dbReference>
<dbReference type="GO" id="GO:0036305">
    <property type="term" value="P:ameloblast differentiation"/>
    <property type="evidence" value="ECO:0000250"/>
    <property type="project" value="UniProtKB"/>
</dbReference>
<dbReference type="GO" id="GO:0007155">
    <property type="term" value="P:cell adhesion"/>
    <property type="evidence" value="ECO:0000303"/>
    <property type="project" value="UniProtKB"/>
</dbReference>
<dbReference type="GO" id="GO:0098609">
    <property type="term" value="P:cell-cell adhesion"/>
    <property type="evidence" value="ECO:0000318"/>
    <property type="project" value="GO_Central"/>
</dbReference>
<dbReference type="GO" id="GO:0002159">
    <property type="term" value="P:desmosome assembly"/>
    <property type="evidence" value="ECO:0000250"/>
    <property type="project" value="UniProtKB"/>
</dbReference>
<dbReference type="GO" id="GO:0002160">
    <property type="term" value="P:desmosome maintenance"/>
    <property type="evidence" value="ECO:0007669"/>
    <property type="project" value="Ensembl"/>
</dbReference>
<dbReference type="GO" id="GO:0045110">
    <property type="term" value="P:intermediate filament bundle assembly"/>
    <property type="evidence" value="ECO:0000314"/>
    <property type="project" value="BHF-UCL"/>
</dbReference>
<dbReference type="GO" id="GO:1902373">
    <property type="term" value="P:negative regulation of mRNA catabolic process"/>
    <property type="evidence" value="ECO:0000315"/>
    <property type="project" value="CAFA"/>
</dbReference>
<dbReference type="GO" id="GO:1903676">
    <property type="term" value="P:positive regulation of cap-dependent translational initiation"/>
    <property type="evidence" value="ECO:0000315"/>
    <property type="project" value="UniProtKB"/>
</dbReference>
<dbReference type="GO" id="GO:0022409">
    <property type="term" value="P:positive regulation of cell-cell adhesion"/>
    <property type="evidence" value="ECO:0000315"/>
    <property type="project" value="UniProtKB"/>
</dbReference>
<dbReference type="GO" id="GO:0010628">
    <property type="term" value="P:positive regulation of gene expression"/>
    <property type="evidence" value="ECO:0000315"/>
    <property type="project" value="CAFA"/>
</dbReference>
<dbReference type="GO" id="GO:0045618">
    <property type="term" value="P:positive regulation of keratinocyte differentiation"/>
    <property type="evidence" value="ECO:0000250"/>
    <property type="project" value="UniProtKB"/>
</dbReference>
<dbReference type="GO" id="GO:1905477">
    <property type="term" value="P:positive regulation of protein localization to membrane"/>
    <property type="evidence" value="ECO:0000315"/>
    <property type="project" value="UniProtKB"/>
</dbReference>
<dbReference type="GO" id="GO:1903078">
    <property type="term" value="P:positive regulation of protein localization to plasma membrane"/>
    <property type="evidence" value="ECO:0000250"/>
    <property type="project" value="UniProtKB"/>
</dbReference>
<dbReference type="GO" id="GO:0045944">
    <property type="term" value="P:positive regulation of transcription by RNA polymerase II"/>
    <property type="evidence" value="ECO:0000315"/>
    <property type="project" value="UniProtKB"/>
</dbReference>
<dbReference type="GO" id="GO:0007165">
    <property type="term" value="P:signal transduction"/>
    <property type="evidence" value="ECO:0000303"/>
    <property type="project" value="UniProtKB"/>
</dbReference>
<dbReference type="GO" id="GO:0035377">
    <property type="term" value="P:transepithelial water transport"/>
    <property type="evidence" value="ECO:0007669"/>
    <property type="project" value="Ensembl"/>
</dbReference>
<dbReference type="FunFam" id="1.25.10.10:FF:000135">
    <property type="entry name" value="Plakophilin 1"/>
    <property type="match status" value="1"/>
</dbReference>
<dbReference type="Gene3D" id="1.25.10.10">
    <property type="entry name" value="Leucine-rich Repeat Variant"/>
    <property type="match status" value="1"/>
</dbReference>
<dbReference type="InterPro" id="IPR011989">
    <property type="entry name" value="ARM-like"/>
</dbReference>
<dbReference type="InterPro" id="IPR016024">
    <property type="entry name" value="ARM-type_fold"/>
</dbReference>
<dbReference type="InterPro" id="IPR000225">
    <property type="entry name" value="Armadillo"/>
</dbReference>
<dbReference type="InterPro" id="IPR028435">
    <property type="entry name" value="Plakophilin/d_Catenin"/>
</dbReference>
<dbReference type="PANTHER" id="PTHR10372:SF3">
    <property type="entry name" value="PLAKOPHILIN-1"/>
    <property type="match status" value="1"/>
</dbReference>
<dbReference type="PANTHER" id="PTHR10372">
    <property type="entry name" value="PLAKOPHILLIN-RELATED"/>
    <property type="match status" value="1"/>
</dbReference>
<dbReference type="Pfam" id="PF00514">
    <property type="entry name" value="Arm"/>
    <property type="match status" value="1"/>
</dbReference>
<dbReference type="SMART" id="SM00185">
    <property type="entry name" value="ARM"/>
    <property type="match status" value="6"/>
</dbReference>
<dbReference type="SUPFAM" id="SSF48371">
    <property type="entry name" value="ARM repeat"/>
    <property type="match status" value="1"/>
</dbReference>
<dbReference type="PROSITE" id="PS50176">
    <property type="entry name" value="ARM_REPEAT"/>
    <property type="match status" value="3"/>
</dbReference>
<reference key="1">
    <citation type="journal article" date="1994" name="J. Cell Sci.">
        <title>Band 6 protein, a major constituent of desmosomes from stratified epithelia, is a novel member of the armadillo multigene family.</title>
        <authorList>
            <person name="Hatzfeld M."/>
            <person name="Kristjansson G.I."/>
            <person name="Plessmann U."/>
            <person name="Weber K."/>
        </authorList>
    </citation>
    <scope>NUCLEOTIDE SEQUENCE [MRNA] (ISOFORM 1)</scope>
    <source>
        <tissue>Epidermis</tissue>
    </source>
</reference>
<reference key="2">
    <citation type="journal article" date="1997" name="Cell Tissue Res.">
        <title>Plakophilins 1a and 1b: widespread nuclear proteins recruited in specific epithelial cells as desmosomal plaque components.</title>
        <authorList>
            <person name="Schmidt A."/>
            <person name="Langbein L."/>
            <person name="Rode M."/>
            <person name="Praetzel S."/>
            <person name="Zimbelmann R."/>
            <person name="Franke W.W."/>
        </authorList>
    </citation>
    <scope>NUCLEOTIDE SEQUENCE [GENOMIC DNA / MRNA] (ISOFORMS 1 AND 2)</scope>
    <scope>SUBCELLULAR LOCATION</scope>
    <scope>TISSUE SPECIFICITY</scope>
</reference>
<reference key="3">
    <citation type="submission" date="2005-07" db="EMBL/GenBank/DDBJ databases">
        <authorList>
            <person name="Mural R.J."/>
            <person name="Istrail S."/>
            <person name="Sutton G.G."/>
            <person name="Florea L."/>
            <person name="Halpern A.L."/>
            <person name="Mobarry C.M."/>
            <person name="Lippert R."/>
            <person name="Walenz B."/>
            <person name="Shatkay H."/>
            <person name="Dew I."/>
            <person name="Miller J.R."/>
            <person name="Flanigan M.J."/>
            <person name="Edwards N.J."/>
            <person name="Bolanos R."/>
            <person name="Fasulo D."/>
            <person name="Halldorsson B.V."/>
            <person name="Hannenhalli S."/>
            <person name="Turner R."/>
            <person name="Yooseph S."/>
            <person name="Lu F."/>
            <person name="Nusskern D.R."/>
            <person name="Shue B.C."/>
            <person name="Zheng X.H."/>
            <person name="Zhong F."/>
            <person name="Delcher A.L."/>
            <person name="Huson D.H."/>
            <person name="Kravitz S.A."/>
            <person name="Mouchard L."/>
            <person name="Reinert K."/>
            <person name="Remington K.A."/>
            <person name="Clark A.G."/>
            <person name="Waterman M.S."/>
            <person name="Eichler E.E."/>
            <person name="Adams M.D."/>
            <person name="Hunkapiller M.W."/>
            <person name="Myers E.W."/>
            <person name="Venter J.C."/>
        </authorList>
    </citation>
    <scope>NUCLEOTIDE SEQUENCE [LARGE SCALE GENOMIC DNA]</scope>
</reference>
<reference key="4">
    <citation type="journal article" date="2004" name="Genome Res.">
        <title>The status, quality, and expansion of the NIH full-length cDNA project: the Mammalian Gene Collection (MGC).</title>
        <authorList>
            <consortium name="The MGC Project Team"/>
        </authorList>
    </citation>
    <scope>NUCLEOTIDE SEQUENCE [LARGE SCALE MRNA] (ISOFORM 1)</scope>
</reference>
<reference key="5">
    <citation type="journal article" date="1997" name="Nat. Genet.">
        <title>Mutations in the plakophilin 1 gene result in ectodermal dysplasia/skin fragility syndrome.</title>
        <authorList>
            <person name="McGrath J.A."/>
            <person name="McMillan J.R."/>
            <person name="Shemanko C.S."/>
            <person name="Runswick S.K."/>
            <person name="Leigh I.M."/>
            <person name="Lane E.B."/>
            <person name="Garrod D.R."/>
            <person name="Eady R.A.J."/>
        </authorList>
    </citation>
    <scope>INVOLVEMENT IN ECTODERMAL DYSPLASIA/SKIN FRAGILITY SYNDROME</scope>
    <scope>FUNCTION</scope>
</reference>
<reference key="6">
    <citation type="journal article" date="2000" name="J. Cell Sci.">
        <title>Interaction of plakophilins with desmoplakin and intermediate filament proteins: an in vitro analysis.</title>
        <authorList>
            <person name="Hofmann I."/>
            <person name="Mertens C."/>
            <person name="Brettel M."/>
            <person name="Nimmrich V."/>
            <person name="Schnoelzer M."/>
            <person name="Herrmann H."/>
        </authorList>
    </citation>
    <scope>FUNCTION</scope>
    <scope>INTERACTION WITH KRT5; KRT8; KRT14; KRT18; VIM; DSP AND DES</scope>
</reference>
<reference key="7">
    <citation type="journal article" date="2002" name="J. Biol. Chem.">
        <title>Protein binding and functional characterization of plakophilin 2. Evidence for its diverse roles in desmosomes and beta -catenin signaling.</title>
        <authorList>
            <person name="Chen X."/>
            <person name="Bonne S."/>
            <person name="Hatzfeld M."/>
            <person name="van Roy F."/>
            <person name="Green K.J."/>
        </authorList>
    </citation>
    <scope>INTERACTION WITH DSP</scope>
</reference>
<reference key="8">
    <citation type="journal article" date="2019" name="Cell. Mol. Life Sci.">
        <title>Plakophilin 1 but not plakophilin 3 regulates desmoglein clustering.</title>
        <authorList>
            <person name="Fuchs M."/>
            <person name="Foresti M."/>
            <person name="Radeva M.Y."/>
            <person name="Kugelmann D."/>
            <person name="Keil R."/>
            <person name="Hatzfeld M."/>
            <person name="Spindler V."/>
            <person name="Waschke J."/>
            <person name="Vielmuth F."/>
        </authorList>
    </citation>
    <scope>SUBCELLULAR LOCATION</scope>
</reference>
<reference key="9">
    <citation type="journal article" date="2010" name="J. Cell Biol.">
        <title>Plakophilin 1 stimulates translation by promoting eIF4A1 activity.</title>
        <authorList>
            <person name="Wolf A."/>
            <person name="Krause-Gruszczynska M."/>
            <person name="Birkenmeier O."/>
            <person name="Ostareck-Lederer A."/>
            <person name="Huettelmaier S."/>
            <person name="Hatzfeld M."/>
        </authorList>
    </citation>
    <scope>FUNCTION</scope>
    <scope>INTERACTION WITH EIF4A1</scope>
    <scope>SUBCELLULAR LOCATION</scope>
</reference>
<reference key="10">
    <citation type="journal article" date="2010" name="J. Invest. Dermatol.">
        <title>Plakophilin-1 localizes to the nucleus and interacts with single-stranded DNA.</title>
        <authorList>
            <person name="Sobolik-Delmaire T."/>
            <person name="Reddy R."/>
            <person name="Pashaj A."/>
            <person name="Roberts B.J."/>
            <person name="Wahl J.K. III"/>
        </authorList>
    </citation>
    <scope>FUNCTION</scope>
    <scope>SUBCELLULAR LOCATION</scope>
</reference>
<reference key="11">
    <citation type="journal article" date="2013" name="J. Cell Sci.">
        <title>Insulin signaling via Akt2 switches plakophilin 1 function from stabilizing cell adhesion to promoting cell proliferation.</title>
        <authorList>
            <person name="Wolf A."/>
            <person name="Rietscher K."/>
            <person name="Glass M."/>
            <person name="Huettelmaier S."/>
            <person name="Schutkowski M."/>
            <person name="Ihling C."/>
            <person name="Sinz A."/>
            <person name="Wingenfeld A."/>
            <person name="Mun A."/>
            <person name="Hatzfeld M."/>
        </authorList>
    </citation>
    <scope>FUNCTION</scope>
    <scope>INTERACTION WITH DSP AND EIF4A1</scope>
    <scope>SUBCELLULAR LOCATION</scope>
    <scope>PHOSPHORYLATION AT SER-118</scope>
</reference>
<reference key="12">
    <citation type="journal article" date="2014" name="Mol. Cell. Biol.">
        <title>Plakophilins 1 and 3 bind to FXR1 and thereby influence the mRNA stability of desmosomal proteins.</title>
        <authorList>
            <person name="Fischer-Keso R."/>
            <person name="Breuninger S."/>
            <person name="Hofmann S."/>
            <person name="Henn M."/>
            <person name="Roehrig T."/>
            <person name="Stroebel P."/>
            <person name="Stoecklin G."/>
            <person name="Hofmann I."/>
        </authorList>
    </citation>
    <scope>FUNCTION</scope>
    <scope>INTERACTION WITH FXR1</scope>
</reference>
<reference key="13">
    <citation type="journal article" date="2018" name="J. Cell Sci.">
        <title>14-3-3 proteins regulate desmosomal adhesion via plakophilins.</title>
        <authorList>
            <person name="Rietscher K."/>
            <person name="Keil R."/>
            <person name="Jordan A."/>
            <person name="Hatzfeld M."/>
        </authorList>
    </citation>
    <scope>INTERACTION WITH YWHAG</scope>
    <scope>MUTAGENESIS OF SER-54; SER-118; SER-119; SER-155 AND THR-171</scope>
</reference>
<reference key="14">
    <citation type="journal article" date="2019" name="Int. J. Mol. Sci.">
        <title>Evidence for the Desmosomal Cadherin Desmoglein-3 in Regulating YAP and Phospho-YAP in Keratinocyte Responses to Mechanical Forces.</title>
        <authorList>
            <person name="Uttagomol J."/>
            <person name="Ahmad U.S."/>
            <person name="Rehman A."/>
            <person name="Huang Y."/>
            <person name="Laly A.C."/>
            <person name="Kang A."/>
            <person name="Soetaert J."/>
            <person name="Chance R."/>
            <person name="Teh M.T."/>
            <person name="Connelly J.T."/>
            <person name="Wan H."/>
        </authorList>
    </citation>
    <scope>FUNCTION</scope>
    <scope>IDENTIFICATION IN A COMPLEX WITH DSG3; YAP1 AND YWHAG</scope>
    <scope>INTERACTION WITH DSG3; YAP1 AND YWHAG</scope>
</reference>
<reference key="15">
    <citation type="journal article" date="2005" name="J. Mol. Biol.">
        <title>Structure of the armadillo repeat domain of plakophilin 1.</title>
        <authorList>
            <person name="Choi H.-J."/>
            <person name="Weis W.I."/>
        </authorList>
    </citation>
    <scope>X-RAY CRYSTALLOGRAPHY (2.8 ANGSTROMS) OF 244-721</scope>
    <scope>DOMAINS ARM REPEATS</scope>
</reference>
<comment type="function">
    <text evidence="1 3 5 6 7 8 11 12">A component of desmosome cell-cell junctions which are required for positive regulation of cellular adhesion (PubMed:23444369). Plays a role in desmosome protein expression regulation and localization to the desmosomal plaque, thereby maintaining cell sheet integrity and anchorage of desmosomes to intermediate filaments (PubMed:10852826, PubMed:23444369). Required for localization of DSG3 and YAP1 to the cell membrane in keratinocytes in response to mechanical strain, via the formation of an interaction complex composed of DSG3, YAP1, PKP1 and YWHAG (PubMed:31835537). Positively regulates differentiation of keratinocytes, potentially via promoting localization of DSG1 at desmosome cell junctions (By similarity). Required for calcium-independent development and maturation of desmosome plaques specifically at lateral cell-cell contacts in differentiating keratinocytes (By similarity). Plays a role in the maintenance of DSG3 protein abundance, DSG3 clustering and localization of these clusters to the cell membrane in keratinocytes (By similarity). May also promote keratinocyte proliferation and morphogenesis during postnatal development (PubMed:9326952). Required for tight junction inside-out transepidermal barrier function of the skin (By similarity). Promotes Wnt-mediated proliferation and differentiation of ameloblasts, via facilitating TJP1/ZO-1 localization to tight junctions (By similarity). Binds single-stranded DNA (ssDNA), and may thereby play a role in sensing DNA damage and promoting cell survival (PubMed:20613778). Positively regulates cap-dependent translation and as a result cell proliferation, via recruitment of EIF4A1 to the initiation complex and promotion of EIF4A1 ATPase activity (PubMed:20156963, PubMed:23444369). Regulates the mRNA stability and protein abundance of desmosome components PKP2, PKP3, DSC2 and DSP, potentially via its interaction with FXR1 (PubMed:25225333).</text>
</comment>
<comment type="subunit">
    <text evidence="1 3 4 5 7 8 9 11">Part of a complex that contains DSG3, PKP1, YAP1 and YWHAG; the complex is required for localization of DSG3 and YAP1 to the cell membrane in keratinocytes (PubMed:31835537). Interacts with DSP (PubMed:11790773, PubMed:23444369). Interacts (via N-terminus) with KRT5/CK5, KRT8/CK8 (via rod domain), KRT15/CK15 and KRT18/CK18 (via rod domain) as part of intermediate filaments (PubMed:10852826). Interacts with VIM (via rod domain) (PubMed:10852826). Interacts with DSP (PubMed:10852826). Interacts with DES (PubMed:10852826). Interacts with FXR1; the interaction may facilitate the binding of PKP1 to PKP2, PKP3 and DSP mRNA (PubMed:25225333). Interacts (via N-terminus) with EIF4A1; the interaction promotes EIF4A1 recruitment to the cap-dependent translation complex and EIF4A1 ATPase activity (PubMed:20156963, PubMed:23444369). Interacts with TJP1/ZO-1; the interaction facilitates TJP1/ZO-1 localization to the plasma membrane (By similarity). Interacts (when phosphorylated) with YWHAG; the interaction results in translocation of PKP1 to the cytoplasm and loss of intercellular adhesion in keratinocytes (PubMed:29678907).</text>
</comment>
<comment type="interaction">
    <interactant intactId="EBI-2513407">
        <id>Q13835</id>
    </interactant>
    <interactant intactId="EBI-1045757">
        <id>Q02413</id>
        <label>DSG1</label>
    </interactant>
    <organismsDiffer>false</organismsDiffer>
    <experiments>2</experiments>
</comment>
<comment type="interaction">
    <interactant intactId="EBI-2513407">
        <id>Q13835</id>
    </interactant>
    <interactant intactId="EBI-372530">
        <id>Q9UHL9</id>
        <label>GTF2IRD1</label>
    </interactant>
    <organismsDiffer>false</organismsDiffer>
    <experiments>2</experiments>
</comment>
<comment type="interaction">
    <interactant intactId="EBI-2513407">
        <id>Q13835</id>
    </interactant>
    <interactant intactId="EBI-949753">
        <id>Q63HR2</id>
        <label>TNS2</label>
    </interactant>
    <organismsDiffer>false</organismsDiffer>
    <experiments>3</experiments>
</comment>
<comment type="interaction">
    <interactant intactId="EBI-9087684">
        <id>Q13835-2</id>
    </interactant>
    <interactant intactId="EBI-10171799">
        <id>A1A5D9</id>
        <label>BICDL2</label>
    </interactant>
    <organismsDiffer>false</organismsDiffer>
    <experiments>3</experiments>
</comment>
<comment type="interaction">
    <interactant intactId="EBI-9087684">
        <id>Q13835-2</id>
    </interactant>
    <interactant intactId="EBI-3866279">
        <id>Q9BWT7</id>
        <label>CARD10</label>
    </interactant>
    <organismsDiffer>false</organismsDiffer>
    <experiments>3</experiments>
</comment>
<comment type="interaction">
    <interactant intactId="EBI-9087684">
        <id>Q13835-2</id>
    </interactant>
    <interactant intactId="EBI-742887">
        <id>Q8TAP6</id>
        <label>CEP76</label>
    </interactant>
    <organismsDiffer>false</organismsDiffer>
    <experiments>3</experiments>
</comment>
<comment type="interaction">
    <interactant intactId="EBI-9087684">
        <id>Q13835-2</id>
    </interactant>
    <interactant intactId="EBI-355041">
        <id>P15924</id>
        <label>DSP</label>
    </interactant>
    <organismsDiffer>false</organismsDiffer>
    <experiments>2</experiments>
</comment>
<comment type="interaction">
    <interactant intactId="EBI-9087684">
        <id>Q13835-2</id>
    </interactant>
    <interactant intactId="EBI-618309">
        <id>Q08379</id>
        <label>GOLGA2</label>
    </interactant>
    <organismsDiffer>false</organismsDiffer>
    <experiments>3</experiments>
</comment>
<comment type="interaction">
    <interactant intactId="EBI-9087684">
        <id>Q13835-2</id>
    </interactant>
    <interactant intactId="EBI-10961706">
        <id>Q96ED9-2</id>
        <label>HOOK2</label>
    </interactant>
    <organismsDiffer>false</organismsDiffer>
    <experiments>3</experiments>
</comment>
<comment type="interaction">
    <interactant intactId="EBI-9087684">
        <id>Q13835-2</id>
    </interactant>
    <interactant intactId="EBI-7116203">
        <id>O75031</id>
        <label>HSF2BP</label>
    </interactant>
    <organismsDiffer>false</organismsDiffer>
    <experiments>3</experiments>
</comment>
<comment type="interaction">
    <interactant intactId="EBI-9087684">
        <id>Q13835-2</id>
    </interactant>
    <interactant intactId="EBI-702178">
        <id>P02533</id>
        <label>KRT14</label>
    </interactant>
    <organismsDiffer>false</organismsDiffer>
    <experiments>2</experiments>
</comment>
<comment type="interaction">
    <interactant intactId="EBI-9087684">
        <id>Q13835-2</id>
    </interactant>
    <interactant intactId="EBI-297888">
        <id>P05783</id>
        <label>KRT18</label>
    </interactant>
    <organismsDiffer>false</organismsDiffer>
    <experiments>4</experiments>
</comment>
<comment type="interaction">
    <interactant intactId="EBI-9087684">
        <id>Q13835-2</id>
    </interactant>
    <interactant intactId="EBI-702187">
        <id>P13647</id>
        <label>KRT5</label>
    </interactant>
    <organismsDiffer>false</organismsDiffer>
    <experiments>2</experiments>
</comment>
<comment type="interaction">
    <interactant intactId="EBI-9087684">
        <id>Q13835-2</id>
    </interactant>
    <interactant intactId="EBI-297852">
        <id>P05787</id>
        <label>KRT8</label>
    </interactant>
    <organismsDiffer>false</organismsDiffer>
    <experiments>3</experiments>
</comment>
<comment type="interaction">
    <interactant intactId="EBI-9087684">
        <id>Q13835-2</id>
    </interactant>
    <interactant intactId="EBI-10271199">
        <id>Q8NI38</id>
        <label>NFKBID</label>
    </interactant>
    <organismsDiffer>false</organismsDiffer>
    <experiments>3</experiments>
</comment>
<comment type="interaction">
    <interactant intactId="EBI-9087684">
        <id>Q13835-2</id>
    </interactant>
    <interactant intactId="EBI-353844">
        <id>P08670</id>
        <label>VIM</label>
    </interactant>
    <organismsDiffer>false</organismsDiffer>
    <experiments>3</experiments>
</comment>
<comment type="subcellular location">
    <molecule>Isoform 1</molecule>
    <subcellularLocation>
        <location evidence="13">Cell junction</location>
        <location evidence="13">Desmosome</location>
    </subcellularLocation>
</comment>
<comment type="subcellular location">
    <molecule>Isoform 2</molecule>
    <subcellularLocation>
        <location evidence="13">Nucleus</location>
    </subcellularLocation>
</comment>
<comment type="subcellular location">
    <subcellularLocation>
        <location evidence="4 6">Nucleus</location>
    </subcellularLocation>
    <subcellularLocation>
        <location evidence="5">Cytoplasm</location>
        <location evidence="5">Perinuclear region</location>
    </subcellularLocation>
    <subcellularLocation>
        <location evidence="6 7">Cytoplasm</location>
    </subcellularLocation>
    <subcellularLocation>
        <location evidence="6 7">Cell junction</location>
        <location evidence="6 7">Desmosome</location>
    </subcellularLocation>
    <subcellularLocation>
        <location evidence="5 10">Cell membrane</location>
    </subcellularLocation>
    <subcellularLocation>
        <location evidence="5">Cytoplasm</location>
        <location evidence="5">Stress granule</location>
    </subcellularLocation>
    <text evidence="1 5 6 7">Colocalizes with EIF4A1 in stress granules following arsenate or hydrogen peroxide treatment (PubMed:20156963). Localizes to nucleoli following DNA damage (PubMed:20613778). Located in the cytoplasm during early tooth development, however localizes to the cell membrane in ameloblasts during molar growth (By similarity). Ca(2+)-mediated localization to the cell membrane in dental epithelial cells is inhibited via WNT3A (By similarity). Localizes to the cytoplasm when the phosphorylated form interacts with YWHAG (By similarity). Initially localized to the cytoplasm however as keratinocyte differentiation proceeds becomes localized to cell junctions as early cell-cell contacts become linear as part of membrane sealing (By similarity). Localized to lateral cell contacts in colocalization with DSP as epithelial sheet formation completes (By similarity). Protein stability is increased and localizes to the cytoplasm when phosphorylated at the N-terminus by AKT2 (PubMed:23444369). The unphosphorylated form is preferentially localized to desmosomes (PubMed:23444369).</text>
</comment>
<comment type="alternative products">
    <event type="alternative splicing"/>
    <isoform>
        <id>Q13835-1</id>
        <name>2</name>
        <name evidence="16">1b</name>
        <sequence type="displayed"/>
    </isoform>
    <isoform>
        <id>Q13835-2</id>
        <name>1</name>
        <name evidence="16">1a</name>
        <sequence type="described" ref="VSP_006735"/>
    </isoform>
</comment>
<comment type="tissue specificity">
    <molecule>Isoform 1</molecule>
    <text evidence="13">Expressed in stratified squamous, complex, glandular duct and bladder epithelia (at protein level).</text>
</comment>
<comment type="tissue specificity">
    <molecule>Isoform 2</molecule>
    <text evidence="13">Widely expressed (at protein level).</text>
</comment>
<comment type="PTM">
    <text evidence="1 7">Phosphorylated by AKT2; required for interaction with YWHAG and subsequent localization away from desmosomes to the cytoplasm (By similarity). Phosphorylation of Ser-118 by AKT2 promotes PKP1-driven cap-dependent mRNA translation and decreases intercellular adhesion, phosphorylation is promoted by insulin (PubMed:23444369). Phosphorylation by RIPK4 at the N-terminus is required for its role in differentiation of keratinocytes and DSG1 localization at cell junctions (By similarity).</text>
</comment>
<comment type="disease">
    <disease id="DI-00429">
        <name>Ectodermal dysplasia-skin fragility syndrome</name>
        <acronym>EDSFS</acronym>
        <description>A form of ectodermal dysplasia, a heterogeneous group of disorders due to abnormal development of two or more ectodermal structures. Characterized by features of both cutaneous fragility and congenital ectodermal dysplasia affecting skin, hair and nails. There is no evidence of significant abnormalities in other epithelia or tissues. Desmosomes in the skin are small and poorly formed with widening of keratinocyte intercellular spaces and perturbed desmosome/keratin intermediate filament interactions.</description>
        <dbReference type="MIM" id="604536"/>
    </disease>
    <text>The disease is caused by variants affecting the gene represented in this entry.</text>
</comment>
<comment type="similarity">
    <text evidence="17">Belongs to the beta-catenin family.</text>
</comment>
<feature type="chain" id="PRO_0000064284" description="Plakophilin-1">
    <location>
        <begin position="1"/>
        <end position="747"/>
    </location>
</feature>
<feature type="repeat" description="ARM 1">
    <location>
        <begin position="243"/>
        <end position="274"/>
    </location>
</feature>
<feature type="repeat" description="ARM 2">
    <location>
        <begin position="275"/>
        <end position="316"/>
    </location>
</feature>
<feature type="repeat" description="ARM 3">
    <location>
        <begin position="317"/>
        <end position="359"/>
    </location>
</feature>
<feature type="repeat" description="ARM 4">
    <location>
        <begin position="360"/>
        <end position="415"/>
    </location>
</feature>
<feature type="repeat" description="ARM 5">
    <location>
        <begin position="416"/>
        <end position="463"/>
    </location>
</feature>
<feature type="repeat" description="ARM 6">
    <location>
        <begin position="525"/>
        <end position="556"/>
    </location>
</feature>
<feature type="repeat" description="ARM 7">
    <location>
        <begin position="557"/>
        <end position="603"/>
    </location>
</feature>
<feature type="repeat" description="ARM 8">
    <location>
        <begin position="604"/>
        <end position="649"/>
    </location>
</feature>
<feature type="repeat" description="ARM 9">
    <location>
        <begin position="650"/>
        <end position="713"/>
    </location>
</feature>
<feature type="region of interest" description="Required for interaction with EIF4A1" evidence="5">
    <location>
        <begin position="1"/>
        <end position="286"/>
    </location>
</feature>
<feature type="region of interest" description="Required for binding to single stranded DNA" evidence="6">
    <location>
        <begin position="1"/>
        <end position="234"/>
    </location>
</feature>
<feature type="region of interest" description="Disordered" evidence="2">
    <location>
        <begin position="48"/>
        <end position="68"/>
    </location>
</feature>
<feature type="region of interest" description="Phosphorylation in this region is required for cytoplasmic localization and protein stabilization" evidence="7">
    <location>
        <begin position="54"/>
        <end position="69"/>
    </location>
</feature>
<feature type="region of interest" description="Phosphorylation in this region is required for cytoplasmic localization and protein stabilization" evidence="7">
    <location>
        <begin position="116"/>
        <end position="191"/>
    </location>
</feature>
<feature type="region of interest" description="Required for WNT-mediated nuclear localization" evidence="1">
    <location>
        <begin position="160"/>
        <end position="269"/>
    </location>
</feature>
<feature type="modified residue" description="Phosphoserine" evidence="1">
    <location>
        <position position="4"/>
    </location>
</feature>
<feature type="modified residue" description="Phosphoserine; by PKB/AKT2" evidence="7">
    <location>
        <position position="118"/>
    </location>
</feature>
<feature type="modified residue" description="Phosphoserine" evidence="1">
    <location>
        <position position="119"/>
    </location>
</feature>
<feature type="modified residue" description="Phosphoserine" evidence="1">
    <location>
        <position position="121"/>
    </location>
</feature>
<feature type="modified residue" description="Phosphoserine" evidence="1">
    <location>
        <position position="142"/>
    </location>
</feature>
<feature type="splice variant" id="VSP_006735" description="In isoform 1." evidence="14 15 16">
    <location>
        <begin position="412"/>
        <end position="432"/>
    </location>
</feature>
<feature type="sequence variant" id="VAR_033526" description="In dbSNP:rs34626929.">
    <original>R</original>
    <variation>H</variation>
    <location>
        <position position="116"/>
    </location>
</feature>
<feature type="sequence variant" id="VAR_033527" description="In dbSNP:rs34704938.">
    <original>C</original>
    <variation>Y</variation>
    <location>
        <position position="161"/>
    </location>
</feature>
<feature type="sequence variant" id="VAR_033528" description="In dbSNP:rs35507614.">
    <original>I</original>
    <variation>V</variation>
    <location>
        <position position="196"/>
    </location>
</feature>
<feature type="sequence variant" id="VAR_053811" description="In dbSNP:rs1626370.">
    <original>G</original>
    <variation>D</variation>
    <location>
        <position position="415"/>
    </location>
</feature>
<feature type="sequence variant" id="VAR_062171" description="In dbSNP:rs10920171.">
    <original>A</original>
    <variation>V</variation>
    <location>
        <position position="463"/>
    </location>
</feature>
<feature type="mutagenesis site" description="No effect on interaction with YWHAG." evidence="9">
    <original>S</original>
    <variation>A</variation>
    <location>
        <position position="54"/>
    </location>
</feature>
<feature type="mutagenesis site" description="Reduces the interaction with YWHAG." evidence="9">
    <original>S</original>
    <variation>A</variation>
    <location>
        <position position="118"/>
    </location>
</feature>
<feature type="mutagenesis site" description="Reduces the interaction with YWHAG." evidence="9">
    <original>S</original>
    <variation>A</variation>
    <location>
        <position position="119"/>
    </location>
</feature>
<feature type="mutagenesis site" description="Abolishes interaction with YWHAG." evidence="9">
    <original>S</original>
    <variation>A</variation>
    <location>
        <position position="155"/>
    </location>
</feature>
<feature type="mutagenesis site" description="No effect on interaction with YWHAG." evidence="9">
    <original>T</original>
    <variation>A</variation>
    <location>
        <position position="171"/>
    </location>
</feature>
<feature type="sequence conflict" description="In Ref. 1; CAA55881." evidence="17" ref="1">
    <original>R</original>
    <variation>G</variation>
    <location>
        <position position="154"/>
    </location>
</feature>
<feature type="sequence conflict" description="In Ref. 1; CAA55881." evidence="17" ref="1">
    <original>PPISCNK</original>
    <variation>RHLLQQ</variation>
    <location>
        <begin position="216"/>
        <end position="222"/>
    </location>
</feature>
<feature type="sequence conflict" description="In Ref. 1; CAA55881." evidence="17" ref="1">
    <original>V</original>
    <variation>E</variation>
    <location>
        <position position="462"/>
    </location>
</feature>
<feature type="sequence conflict" description="In Ref. 1; CAA55881." evidence="17" ref="1">
    <original>Q</original>
    <variation>K</variation>
    <location>
        <position position="496"/>
    </location>
</feature>
<feature type="sequence conflict" description="In Ref. 1; CAA55881." evidence="17" ref="1">
    <original>T</original>
    <variation>P</variation>
    <location>
        <position position="506"/>
    </location>
</feature>
<feature type="sequence conflict" description="In Ref. 1; CAA55881." evidence="17" ref="1">
    <original>L</original>
    <variation>S</variation>
    <location>
        <position position="553"/>
    </location>
</feature>
<feature type="helix" evidence="18">
    <location>
        <begin position="247"/>
        <end position="255"/>
    </location>
</feature>
<feature type="helix" evidence="18">
    <location>
        <begin position="260"/>
        <end position="272"/>
    </location>
</feature>
<feature type="helix" evidence="18">
    <location>
        <begin position="279"/>
        <end position="285"/>
    </location>
</feature>
<feature type="helix" evidence="18">
    <location>
        <begin position="288"/>
        <end position="295"/>
    </location>
</feature>
<feature type="helix" evidence="18">
    <location>
        <begin position="301"/>
        <end position="315"/>
    </location>
</feature>
<feature type="helix" evidence="18">
    <location>
        <begin position="319"/>
        <end position="327"/>
    </location>
</feature>
<feature type="helix" evidence="18">
    <location>
        <begin position="331"/>
        <end position="338"/>
    </location>
</feature>
<feature type="helix" evidence="18">
    <location>
        <begin position="344"/>
        <end position="358"/>
    </location>
</feature>
<feature type="strand" evidence="18">
    <location>
        <begin position="360"/>
        <end position="362"/>
    </location>
</feature>
<feature type="helix" evidence="18">
    <location>
        <begin position="364"/>
        <end position="378"/>
    </location>
</feature>
<feature type="helix" evidence="18">
    <location>
        <begin position="381"/>
        <end position="384"/>
    </location>
</feature>
<feature type="helix" evidence="18">
    <location>
        <begin position="400"/>
        <end position="411"/>
    </location>
</feature>
<feature type="helix" evidence="18">
    <location>
        <begin position="438"/>
        <end position="444"/>
    </location>
</feature>
<feature type="helix" evidence="18">
    <location>
        <begin position="450"/>
        <end position="464"/>
    </location>
</feature>
<feature type="helix" evidence="18">
    <location>
        <begin position="472"/>
        <end position="482"/>
    </location>
</feature>
<feature type="turn" evidence="18">
    <location>
        <begin position="483"/>
        <end position="485"/>
    </location>
</feature>
<feature type="helix" evidence="18">
    <location>
        <begin position="486"/>
        <end position="489"/>
    </location>
</feature>
<feature type="helix" evidence="18">
    <location>
        <begin position="493"/>
        <end position="499"/>
    </location>
</feature>
<feature type="helix" evidence="18">
    <location>
        <begin position="539"/>
        <end position="544"/>
    </location>
</feature>
<feature type="helix" evidence="18">
    <location>
        <begin position="546"/>
        <end position="558"/>
    </location>
</feature>
<feature type="helix" evidence="18">
    <location>
        <begin position="562"/>
        <end position="575"/>
    </location>
</feature>
<feature type="strand" evidence="18">
    <location>
        <begin position="579"/>
        <end position="581"/>
    </location>
</feature>
<feature type="helix" evidence="18">
    <location>
        <begin position="582"/>
        <end position="591"/>
    </location>
</feature>
<feature type="helix" evidence="18">
    <location>
        <begin position="597"/>
        <end position="603"/>
    </location>
</feature>
<feature type="helix" evidence="18">
    <location>
        <begin position="609"/>
        <end position="623"/>
    </location>
</feature>
<feature type="helix" evidence="18">
    <location>
        <begin position="626"/>
        <end position="628"/>
    </location>
</feature>
<feature type="helix" evidence="18">
    <location>
        <begin position="629"/>
        <end position="635"/>
    </location>
</feature>
<feature type="helix" evidence="18">
    <location>
        <begin position="637"/>
        <end position="642"/>
    </location>
</feature>
<feature type="helix" evidence="18">
    <location>
        <begin position="654"/>
        <end position="669"/>
    </location>
</feature>
<feature type="helix" evidence="18">
    <location>
        <begin position="674"/>
        <end position="679"/>
    </location>
</feature>
<feature type="helix" evidence="18">
    <location>
        <begin position="682"/>
        <end position="686"/>
    </location>
</feature>
<feature type="helix" evidence="18">
    <location>
        <begin position="689"/>
        <end position="693"/>
    </location>
</feature>
<feature type="helix" evidence="18">
    <location>
        <begin position="698"/>
        <end position="709"/>
    </location>
</feature>
<feature type="strand" evidence="18">
    <location>
        <begin position="712"/>
        <end position="714"/>
    </location>
</feature>